<proteinExistence type="evidence at transcript level"/>
<feature type="initiator methionine" description="Removed" evidence="3">
    <location>
        <position position="1"/>
    </location>
</feature>
<feature type="chain" id="PRO_0000133800" description="DNA-directed RNA polymerases I, II, and III subunit RPABC2">
    <location>
        <begin position="2"/>
        <end position="127"/>
    </location>
</feature>
<feature type="region of interest" description="Disordered" evidence="4">
    <location>
        <begin position="1"/>
        <end position="53"/>
    </location>
</feature>
<feature type="compositionally biased region" description="Acidic residues" evidence="4">
    <location>
        <begin position="1"/>
        <end position="34"/>
    </location>
</feature>
<feature type="modified residue" description="N-acetylserine" evidence="3">
    <location>
        <position position="2"/>
    </location>
</feature>
<feature type="modified residue" description="Phosphoserine; by CK2" evidence="1">
    <location>
        <position position="2"/>
    </location>
</feature>
<organism>
    <name type="scientific">Mus musculus</name>
    <name type="common">Mouse</name>
    <dbReference type="NCBI Taxonomy" id="10090"/>
    <lineage>
        <taxon>Eukaryota</taxon>
        <taxon>Metazoa</taxon>
        <taxon>Chordata</taxon>
        <taxon>Craniata</taxon>
        <taxon>Vertebrata</taxon>
        <taxon>Euteleostomi</taxon>
        <taxon>Mammalia</taxon>
        <taxon>Eutheria</taxon>
        <taxon>Euarchontoglires</taxon>
        <taxon>Glires</taxon>
        <taxon>Rodentia</taxon>
        <taxon>Myomorpha</taxon>
        <taxon>Muroidea</taxon>
        <taxon>Muridae</taxon>
        <taxon>Murinae</taxon>
        <taxon>Mus</taxon>
        <taxon>Mus</taxon>
    </lineage>
</organism>
<keyword id="KW-0007">Acetylation</keyword>
<keyword id="KW-0240">DNA-directed RNA polymerase</keyword>
<keyword id="KW-0539">Nucleus</keyword>
<keyword id="KW-0597">Phosphoprotein</keyword>
<keyword id="KW-1185">Reference proteome</keyword>
<keyword id="KW-0804">Transcription</keyword>
<sequence>MSDNEDNFDGDDFDDVEEDEGLDDLENAEEEGQENVEILPSGERPQANQKRITTPYMTKYERARVLGTRALQIAMCAPVMVELEGETDPLLIAMKELKARKIPIIIRRYLPDGSYEDWGVDELIISD</sequence>
<gene>
    <name evidence="6" type="primary">Polr2f</name>
</gene>
<reference key="1">
    <citation type="journal article" date="2005" name="Science">
        <title>The transcriptional landscape of the mammalian genome.</title>
        <authorList>
            <person name="Carninci P."/>
            <person name="Kasukawa T."/>
            <person name="Katayama S."/>
            <person name="Gough J."/>
            <person name="Frith M.C."/>
            <person name="Maeda N."/>
            <person name="Oyama R."/>
            <person name="Ravasi T."/>
            <person name="Lenhard B."/>
            <person name="Wells C."/>
            <person name="Kodzius R."/>
            <person name="Shimokawa K."/>
            <person name="Bajic V.B."/>
            <person name="Brenner S.E."/>
            <person name="Batalov S."/>
            <person name="Forrest A.R."/>
            <person name="Zavolan M."/>
            <person name="Davis M.J."/>
            <person name="Wilming L.G."/>
            <person name="Aidinis V."/>
            <person name="Allen J.E."/>
            <person name="Ambesi-Impiombato A."/>
            <person name="Apweiler R."/>
            <person name="Aturaliya R.N."/>
            <person name="Bailey T.L."/>
            <person name="Bansal M."/>
            <person name="Baxter L."/>
            <person name="Beisel K.W."/>
            <person name="Bersano T."/>
            <person name="Bono H."/>
            <person name="Chalk A.M."/>
            <person name="Chiu K.P."/>
            <person name="Choudhary V."/>
            <person name="Christoffels A."/>
            <person name="Clutterbuck D.R."/>
            <person name="Crowe M.L."/>
            <person name="Dalla E."/>
            <person name="Dalrymple B.P."/>
            <person name="de Bono B."/>
            <person name="Della Gatta G."/>
            <person name="di Bernardo D."/>
            <person name="Down T."/>
            <person name="Engstrom P."/>
            <person name="Fagiolini M."/>
            <person name="Faulkner G."/>
            <person name="Fletcher C.F."/>
            <person name="Fukushima T."/>
            <person name="Furuno M."/>
            <person name="Futaki S."/>
            <person name="Gariboldi M."/>
            <person name="Georgii-Hemming P."/>
            <person name="Gingeras T.R."/>
            <person name="Gojobori T."/>
            <person name="Green R.E."/>
            <person name="Gustincich S."/>
            <person name="Harbers M."/>
            <person name="Hayashi Y."/>
            <person name="Hensch T.K."/>
            <person name="Hirokawa N."/>
            <person name="Hill D."/>
            <person name="Huminiecki L."/>
            <person name="Iacono M."/>
            <person name="Ikeo K."/>
            <person name="Iwama A."/>
            <person name="Ishikawa T."/>
            <person name="Jakt M."/>
            <person name="Kanapin A."/>
            <person name="Katoh M."/>
            <person name="Kawasawa Y."/>
            <person name="Kelso J."/>
            <person name="Kitamura H."/>
            <person name="Kitano H."/>
            <person name="Kollias G."/>
            <person name="Krishnan S.P."/>
            <person name="Kruger A."/>
            <person name="Kummerfeld S.K."/>
            <person name="Kurochkin I.V."/>
            <person name="Lareau L.F."/>
            <person name="Lazarevic D."/>
            <person name="Lipovich L."/>
            <person name="Liu J."/>
            <person name="Liuni S."/>
            <person name="McWilliam S."/>
            <person name="Madan Babu M."/>
            <person name="Madera M."/>
            <person name="Marchionni L."/>
            <person name="Matsuda H."/>
            <person name="Matsuzawa S."/>
            <person name="Miki H."/>
            <person name="Mignone F."/>
            <person name="Miyake S."/>
            <person name="Morris K."/>
            <person name="Mottagui-Tabar S."/>
            <person name="Mulder N."/>
            <person name="Nakano N."/>
            <person name="Nakauchi H."/>
            <person name="Ng P."/>
            <person name="Nilsson R."/>
            <person name="Nishiguchi S."/>
            <person name="Nishikawa S."/>
            <person name="Nori F."/>
            <person name="Ohara O."/>
            <person name="Okazaki Y."/>
            <person name="Orlando V."/>
            <person name="Pang K.C."/>
            <person name="Pavan W.J."/>
            <person name="Pavesi G."/>
            <person name="Pesole G."/>
            <person name="Petrovsky N."/>
            <person name="Piazza S."/>
            <person name="Reed J."/>
            <person name="Reid J.F."/>
            <person name="Ring B.Z."/>
            <person name="Ringwald M."/>
            <person name="Rost B."/>
            <person name="Ruan Y."/>
            <person name="Salzberg S.L."/>
            <person name="Sandelin A."/>
            <person name="Schneider C."/>
            <person name="Schoenbach C."/>
            <person name="Sekiguchi K."/>
            <person name="Semple C.A."/>
            <person name="Seno S."/>
            <person name="Sessa L."/>
            <person name="Sheng Y."/>
            <person name="Shibata Y."/>
            <person name="Shimada H."/>
            <person name="Shimada K."/>
            <person name="Silva D."/>
            <person name="Sinclair B."/>
            <person name="Sperling S."/>
            <person name="Stupka E."/>
            <person name="Sugiura K."/>
            <person name="Sultana R."/>
            <person name="Takenaka Y."/>
            <person name="Taki K."/>
            <person name="Tammoja K."/>
            <person name="Tan S.L."/>
            <person name="Tang S."/>
            <person name="Taylor M.S."/>
            <person name="Tegner J."/>
            <person name="Teichmann S.A."/>
            <person name="Ueda H.R."/>
            <person name="van Nimwegen E."/>
            <person name="Verardo R."/>
            <person name="Wei C.L."/>
            <person name="Yagi K."/>
            <person name="Yamanishi H."/>
            <person name="Zabarovsky E."/>
            <person name="Zhu S."/>
            <person name="Zimmer A."/>
            <person name="Hide W."/>
            <person name="Bult C."/>
            <person name="Grimmond S.M."/>
            <person name="Teasdale R.D."/>
            <person name="Liu E.T."/>
            <person name="Brusic V."/>
            <person name="Quackenbush J."/>
            <person name="Wahlestedt C."/>
            <person name="Mattick J.S."/>
            <person name="Hume D.A."/>
            <person name="Kai C."/>
            <person name="Sasaki D."/>
            <person name="Tomaru Y."/>
            <person name="Fukuda S."/>
            <person name="Kanamori-Katayama M."/>
            <person name="Suzuki M."/>
            <person name="Aoki J."/>
            <person name="Arakawa T."/>
            <person name="Iida J."/>
            <person name="Imamura K."/>
            <person name="Itoh M."/>
            <person name="Kato T."/>
            <person name="Kawaji H."/>
            <person name="Kawagashira N."/>
            <person name="Kawashima T."/>
            <person name="Kojima M."/>
            <person name="Kondo S."/>
            <person name="Konno H."/>
            <person name="Nakano K."/>
            <person name="Ninomiya N."/>
            <person name="Nishio T."/>
            <person name="Okada M."/>
            <person name="Plessy C."/>
            <person name="Shibata K."/>
            <person name="Shiraki T."/>
            <person name="Suzuki S."/>
            <person name="Tagami M."/>
            <person name="Waki K."/>
            <person name="Watahiki A."/>
            <person name="Okamura-Oho Y."/>
            <person name="Suzuki H."/>
            <person name="Kawai J."/>
            <person name="Hayashizaki Y."/>
        </authorList>
    </citation>
    <scope>NUCLEOTIDE SEQUENCE [LARGE SCALE MRNA]</scope>
    <source>
        <strain>C57BL/6J</strain>
        <tissue>Pancreas</tissue>
    </source>
</reference>
<reference key="2">
    <citation type="journal article" date="2004" name="Genome Res.">
        <title>The status, quality, and expansion of the NIH full-length cDNA project: the Mammalian Gene Collection (MGC).</title>
        <authorList>
            <consortium name="The MGC Project Team"/>
        </authorList>
    </citation>
    <scope>NUCLEOTIDE SEQUENCE [LARGE SCALE MRNA]</scope>
    <source>
        <strain>FVB/N</strain>
        <tissue>Colon</tissue>
    </source>
</reference>
<dbReference type="EMBL" id="AK007913">
    <property type="protein sequence ID" value="BAB25345.1"/>
    <property type="molecule type" value="mRNA"/>
</dbReference>
<dbReference type="EMBL" id="BC024419">
    <property type="protein sequence ID" value="AAH24419.1"/>
    <property type="molecule type" value="mRNA"/>
</dbReference>
<dbReference type="CCDS" id="CCDS27634.1"/>
<dbReference type="RefSeq" id="NP_081507.1">
    <property type="nucleotide sequence ID" value="NM_027231.2"/>
</dbReference>
<dbReference type="SMR" id="P61219"/>
<dbReference type="FunCoup" id="P61219">
    <property type="interactions" value="1811"/>
</dbReference>
<dbReference type="IntAct" id="P61219">
    <property type="interactions" value="1"/>
</dbReference>
<dbReference type="STRING" id="10090.ENSMUSP00000155332"/>
<dbReference type="iPTMnet" id="P61219"/>
<dbReference type="PhosphoSitePlus" id="P61219"/>
<dbReference type="jPOST" id="P61219"/>
<dbReference type="PaxDb" id="10090-ENSMUSP00000043566"/>
<dbReference type="PeptideAtlas" id="P61219"/>
<dbReference type="ProteomicsDB" id="260833"/>
<dbReference type="Pumba" id="P61219"/>
<dbReference type="Antibodypedia" id="227">
    <property type="antibodies" value="134 antibodies from 26 providers"/>
</dbReference>
<dbReference type="DNASU" id="69833"/>
<dbReference type="Ensembl" id="ENSMUST00000230271.2">
    <property type="protein sequence ID" value="ENSMUSP00000155332.2"/>
    <property type="gene ID" value="ENSMUSG00000033020.8"/>
</dbReference>
<dbReference type="GeneID" id="69833"/>
<dbReference type="KEGG" id="mmu:69833"/>
<dbReference type="UCSC" id="uc007wst.1">
    <property type="organism name" value="mouse"/>
</dbReference>
<dbReference type="AGR" id="MGI:1349393"/>
<dbReference type="CTD" id="5435"/>
<dbReference type="MGI" id="MGI:1349393">
    <property type="gene designation" value="Polr2f"/>
</dbReference>
<dbReference type="VEuPathDB" id="HostDB:ENSMUSG00000033020"/>
<dbReference type="eggNOG" id="KOG3405">
    <property type="taxonomic scope" value="Eukaryota"/>
</dbReference>
<dbReference type="GeneTree" id="ENSGT00390000010415"/>
<dbReference type="HOGENOM" id="CLU_112527_2_0_1"/>
<dbReference type="InParanoid" id="P61219"/>
<dbReference type="OMA" id="TYMTKYE"/>
<dbReference type="OrthoDB" id="259769at2759"/>
<dbReference type="PhylomeDB" id="P61219"/>
<dbReference type="TreeFam" id="TF103041"/>
<dbReference type="Reactome" id="R-MMU-112382">
    <property type="pathway name" value="Formation of RNA Pol II elongation complex"/>
</dbReference>
<dbReference type="Reactome" id="R-MMU-113418">
    <property type="pathway name" value="Formation of the Early Elongation Complex"/>
</dbReference>
<dbReference type="Reactome" id="R-MMU-5250924">
    <property type="pathway name" value="B-WICH complex positively regulates rRNA expression"/>
</dbReference>
<dbReference type="Reactome" id="R-MMU-674695">
    <property type="pathway name" value="RNA Polymerase II Pre-transcription Events"/>
</dbReference>
<dbReference type="Reactome" id="R-MMU-6781823">
    <property type="pathway name" value="Formation of TC-NER Pre-Incision Complex"/>
</dbReference>
<dbReference type="Reactome" id="R-MMU-6782135">
    <property type="pathway name" value="Dual incision in TC-NER"/>
</dbReference>
<dbReference type="Reactome" id="R-MMU-6782210">
    <property type="pathway name" value="Gap-filling DNA repair synthesis and ligation in TC-NER"/>
</dbReference>
<dbReference type="Reactome" id="R-MMU-6796648">
    <property type="pathway name" value="TP53 Regulates Transcription of DNA Repair Genes"/>
</dbReference>
<dbReference type="Reactome" id="R-MMU-6803529">
    <property type="pathway name" value="FGFR2 alternative splicing"/>
</dbReference>
<dbReference type="Reactome" id="R-MMU-6807505">
    <property type="pathway name" value="RNA polymerase II transcribes snRNA genes"/>
</dbReference>
<dbReference type="Reactome" id="R-MMU-72086">
    <property type="pathway name" value="mRNA Capping"/>
</dbReference>
<dbReference type="Reactome" id="R-MMU-72163">
    <property type="pathway name" value="mRNA Splicing - Major Pathway"/>
</dbReference>
<dbReference type="Reactome" id="R-MMU-72165">
    <property type="pathway name" value="mRNA Splicing - Minor Pathway"/>
</dbReference>
<dbReference type="Reactome" id="R-MMU-72203">
    <property type="pathway name" value="Processing of Capped Intron-Containing Pre-mRNA"/>
</dbReference>
<dbReference type="Reactome" id="R-MMU-73762">
    <property type="pathway name" value="RNA Polymerase I Transcription Initiation"/>
</dbReference>
<dbReference type="Reactome" id="R-MMU-73772">
    <property type="pathway name" value="RNA Polymerase I Promoter Escape"/>
</dbReference>
<dbReference type="Reactome" id="R-MMU-73776">
    <property type="pathway name" value="RNA Polymerase II Promoter Escape"/>
</dbReference>
<dbReference type="Reactome" id="R-MMU-73779">
    <property type="pathway name" value="RNA Polymerase II Transcription Pre-Initiation And Promoter Opening"/>
</dbReference>
<dbReference type="Reactome" id="R-MMU-73863">
    <property type="pathway name" value="RNA Polymerase I Transcription Termination"/>
</dbReference>
<dbReference type="Reactome" id="R-MMU-75953">
    <property type="pathway name" value="RNA Polymerase II Transcription Initiation"/>
</dbReference>
<dbReference type="Reactome" id="R-MMU-75955">
    <property type="pathway name" value="RNA Polymerase II Transcription Elongation"/>
</dbReference>
<dbReference type="Reactome" id="R-MMU-76042">
    <property type="pathway name" value="RNA Polymerase II Transcription Initiation And Promoter Clearance"/>
</dbReference>
<dbReference type="Reactome" id="R-MMU-76061">
    <property type="pathway name" value="RNA Polymerase III Transcription Initiation From Type 1 Promoter"/>
</dbReference>
<dbReference type="Reactome" id="R-MMU-76066">
    <property type="pathway name" value="RNA Polymerase III Transcription Initiation From Type 2 Promoter"/>
</dbReference>
<dbReference type="Reactome" id="R-MMU-76071">
    <property type="pathway name" value="RNA Polymerase III Transcription Initiation From Type 3 Promoter"/>
</dbReference>
<dbReference type="Reactome" id="R-MMU-77075">
    <property type="pathway name" value="RNA Pol II CTD phosphorylation and interaction with CE"/>
</dbReference>
<dbReference type="Reactome" id="R-MMU-9018519">
    <property type="pathway name" value="Estrogen-dependent gene expression"/>
</dbReference>
<dbReference type="BioGRID-ORCS" id="69833">
    <property type="hits" value="23 hits in 78 CRISPR screens"/>
</dbReference>
<dbReference type="ChiTaRS" id="Polr2f">
    <property type="organism name" value="mouse"/>
</dbReference>
<dbReference type="PRO" id="PR:P61219"/>
<dbReference type="Proteomes" id="UP000000589">
    <property type="component" value="Chromosome 15"/>
</dbReference>
<dbReference type="RNAct" id="P61219">
    <property type="molecule type" value="protein"/>
</dbReference>
<dbReference type="Bgee" id="ENSMUSG00000033020">
    <property type="expression patterns" value="Expressed in embryonic brain and 274 other cell types or tissues"/>
</dbReference>
<dbReference type="ExpressionAtlas" id="P61219">
    <property type="expression patterns" value="baseline and differential"/>
</dbReference>
<dbReference type="GO" id="GO:0001650">
    <property type="term" value="C:fibrillar center"/>
    <property type="evidence" value="ECO:0007669"/>
    <property type="project" value="Ensembl"/>
</dbReference>
<dbReference type="GO" id="GO:0005654">
    <property type="term" value="C:nucleoplasm"/>
    <property type="evidence" value="ECO:0000304"/>
    <property type="project" value="Reactome"/>
</dbReference>
<dbReference type="GO" id="GO:0005634">
    <property type="term" value="C:nucleus"/>
    <property type="evidence" value="ECO:0000250"/>
    <property type="project" value="UniProtKB"/>
</dbReference>
<dbReference type="GO" id="GO:0005736">
    <property type="term" value="C:RNA polymerase I complex"/>
    <property type="evidence" value="ECO:0007669"/>
    <property type="project" value="Ensembl"/>
</dbReference>
<dbReference type="GO" id="GO:0005665">
    <property type="term" value="C:RNA polymerase II, core complex"/>
    <property type="evidence" value="ECO:0000250"/>
    <property type="project" value="UniProtKB"/>
</dbReference>
<dbReference type="GO" id="GO:0005666">
    <property type="term" value="C:RNA polymerase III complex"/>
    <property type="evidence" value="ECO:0007669"/>
    <property type="project" value="Ensembl"/>
</dbReference>
<dbReference type="GO" id="GO:0003677">
    <property type="term" value="F:DNA binding"/>
    <property type="evidence" value="ECO:0007669"/>
    <property type="project" value="InterPro"/>
</dbReference>
<dbReference type="GO" id="GO:0003899">
    <property type="term" value="F:DNA-directed RNA polymerase activity"/>
    <property type="evidence" value="ECO:0007669"/>
    <property type="project" value="InterPro"/>
</dbReference>
<dbReference type="GO" id="GO:0006366">
    <property type="term" value="P:transcription by RNA polymerase II"/>
    <property type="evidence" value="ECO:0000250"/>
    <property type="project" value="UniProtKB"/>
</dbReference>
<dbReference type="FunFam" id="3.90.940.10:FF:000003">
    <property type="entry name" value="DNA-directed RNA polymerases I, II, and III subunit RPABC2"/>
    <property type="match status" value="1"/>
</dbReference>
<dbReference type="Gene3D" id="3.90.940.10">
    <property type="match status" value="1"/>
</dbReference>
<dbReference type="InterPro" id="IPR020708">
    <property type="entry name" value="DNA-dir_RNA_polK_14-18kDa_CS"/>
</dbReference>
<dbReference type="InterPro" id="IPR006110">
    <property type="entry name" value="Pol_omega/Rpo6/RPB6"/>
</dbReference>
<dbReference type="InterPro" id="IPR028363">
    <property type="entry name" value="RPB6"/>
</dbReference>
<dbReference type="InterPro" id="IPR036161">
    <property type="entry name" value="RPB6/omega-like_sf"/>
</dbReference>
<dbReference type="InterPro" id="IPR006111">
    <property type="entry name" value="Rpo6/Rpb6"/>
</dbReference>
<dbReference type="NCBIfam" id="NF002208">
    <property type="entry name" value="PRK01099.1-3"/>
    <property type="match status" value="1"/>
</dbReference>
<dbReference type="PANTHER" id="PTHR47227">
    <property type="entry name" value="DNA-DIRECTED RNA POLYMERASE SUBUNIT K"/>
    <property type="match status" value="1"/>
</dbReference>
<dbReference type="PANTHER" id="PTHR47227:SF5">
    <property type="entry name" value="DNA-DIRECTED RNA POLYMERASES I, II, AND III SUBUNIT RPABC2"/>
    <property type="match status" value="1"/>
</dbReference>
<dbReference type="Pfam" id="PF01192">
    <property type="entry name" value="RNA_pol_Rpb6"/>
    <property type="match status" value="1"/>
</dbReference>
<dbReference type="PIRSF" id="PIRSF500154">
    <property type="entry name" value="RPB6"/>
    <property type="match status" value="1"/>
</dbReference>
<dbReference type="PIRSF" id="PIRSF000778">
    <property type="entry name" value="RpoK/RPB6"/>
    <property type="match status" value="1"/>
</dbReference>
<dbReference type="SMART" id="SM01409">
    <property type="entry name" value="RNA_pol_Rpb6"/>
    <property type="match status" value="1"/>
</dbReference>
<dbReference type="SUPFAM" id="SSF63562">
    <property type="entry name" value="RPB6/omega subunit-like"/>
    <property type="match status" value="1"/>
</dbReference>
<dbReference type="PROSITE" id="PS01111">
    <property type="entry name" value="RNA_POL_K_14KD"/>
    <property type="match status" value="1"/>
</dbReference>
<name>RPAB2_MOUSE</name>
<evidence type="ECO:0000250" key="1">
    <source>
        <dbReference type="UniProtKB" id="O88828"/>
    </source>
</evidence>
<evidence type="ECO:0000250" key="2">
    <source>
        <dbReference type="UniProtKB" id="P20435"/>
    </source>
</evidence>
<evidence type="ECO:0000250" key="3">
    <source>
        <dbReference type="UniProtKB" id="P61218"/>
    </source>
</evidence>
<evidence type="ECO:0000256" key="4">
    <source>
        <dbReference type="SAM" id="MobiDB-lite"/>
    </source>
</evidence>
<evidence type="ECO:0000305" key="5"/>
<evidence type="ECO:0000312" key="6">
    <source>
        <dbReference type="MGI" id="MGI:1349393"/>
    </source>
</evidence>
<protein>
    <recommendedName>
        <fullName>DNA-directed RNA polymerases I, II, and III subunit RPABC2</fullName>
        <shortName>RNA polymerases I, II, and III subunit ABC2</shortName>
    </recommendedName>
    <alternativeName>
        <fullName>DNA-directed RNA polymerase II subunit F</fullName>
    </alternativeName>
    <alternativeName>
        <fullName>RPB6 homolog</fullName>
    </alternativeName>
</protein>
<accession>P61219</accession>
<comment type="function">
    <text evidence="2 3">DNA-dependent RNA polymerase catalyzes the transcription of DNA into RNA using the four ribonucleoside triphosphates as substrates. Common component of RNA polymerases I, II, and III which synthesize ribosomal RNA precursors, mRNA precursors and many functional non-coding RNAs, and small RNAs, such as 5S rRNA and tRNAs, respectively. Pol II is the central component of the basal RNA polymerase II transcription machinery. Pols are composed of mobile elements that move relative to each other. In Pol II, POLR2F/RPABC2 is part of the clamp element and together with parts of POLR2A/RPB1 and POLR2B/RPB2 forms a pocket to which the POLR2D/RPB4-POLR2G/RPB7 subcomplex binds.</text>
</comment>
<comment type="subunit">
    <text evidence="3">Component of the RNA polymerase I (Pol I), RNA polymerase II (Pol II) and RNA polymerase III (Pol III) complexes consisting of at least 13, 12 and 17 subunits, respectively (By similarity). Pol I complex consists of a ten-subunit catalytic core composed of POLR1A/RPA1, POLR1B/RPA2, POLR1C/RPAC1, POLR1D/RPAC2, POLR1H/RPA12, POLR2E/RPABC1, POLR2F/RPABC2, POLR2H/RPABC3, POLR2K/RPABC4 and POLR2L/RPABC5; a mobile stalk subunit POLR1F/RPA43 protruding from the core and additional subunits homologous to general transcription factors POLR1E/RPA49 and POLR1G/RPA34. Part of Pol I pre-initiation complex (PIC), in which Pol I core assembles with RRN3 and promoter-bound UTBF and SL1/TIF-IB complex (By similarity). Pol II complex contains a ten-subunit catalytic core composed of POLR2A/RPB1, POLR2B/RPB2, POLR2C/RPB3, POLR2I/RPB9, POLR2J/RPB11, POLR2E/RPABC1, POLR2F/RPABC2, POLR2H/RPABC3, POLR2K/RPABC4 and POLR2L/RPABC5 and a mobile stalk composed of two subunits POLR2D/RPB4 and POLR2G/RPB7. Part of Pol II(G) complex, in which Pol II core associates with an additional subunit POLR2M; unlike conventional Pol II, Pol II(G) functions as a transcriptional repressor. Part of TBP-based Pol II pre-initiation complex (PIC), in which Pol II core assembles with general transcription factors and other specific initiation factors including GTF2E1, GTF2E2, GTF2F1, GTF2F2, TCEA1, ERCC2, ERCC3, GTF2H2, GTF2H3, GTF2H4, GTF2H5, GTF2A1, GTF2A2, GTF2B and TBP; this large multi-subunit PIC complex mediates DNA unwinding and targets Pol II core to the transcription start site where the first phosphodiester bond forms. Pol III complex consists of a ten-subunit catalytic core composed of POLR3A/RPC1, POLR3B/RPC2, POLR1C/RPAC1, POLR1D/RPAC2, POLR3K/RPC10, POLR2E/RPABC1, POLR2F/RPABC2, POLR2H/RPABC3, POLR2K/RPABC4 and POLR2L/RPABC5; a mobile stalk composed of two subunits POLR3H/RPC8 and CRCP/RPC9, protruding from the core and functioning primarily in transcription initiation; and additional subunits homologous to general transcription factors of the RNA polymerase II machinery, POLR3C/RPC3-POLR3F/RPC6-POLR3G/RPC7 heterotrimer required for transcription initiation and POLR3D/RPC4-POLR3E/RPC5 heterodimer involved in both transcription initiation and termination.</text>
</comment>
<comment type="subcellular location">
    <subcellularLocation>
        <location evidence="3">Nucleus</location>
    </subcellularLocation>
    <subcellularLocation>
        <location evidence="3">Nucleus</location>
        <location evidence="3">Nucleolus</location>
    </subcellularLocation>
</comment>
<comment type="similarity">
    <text evidence="5">Belongs to the archaeal Rpo6/eukaryotic RPB6 RNA polymerase subunit family.</text>
</comment>